<protein>
    <recommendedName>
        <fullName>MHC class II regulatory factor RFX1</fullName>
    </recommendedName>
    <alternativeName>
        <fullName>Regulatory factor X 1</fullName>
    </alternativeName>
    <alternativeName>
        <fullName>Transcription factor RFX1</fullName>
    </alternativeName>
</protein>
<accession>P48377</accession>
<accession>Q6PGH8</accession>
<sequence length="963" mass="103707">MATQSYVTELQAAPQASQPPQAPPQALPQPPPPAAPQPPAAATPQPQYVTELQSPQPQTQPPGSQKQYVAELPAAPAPSQPATPAPSPVAQQYIVVTVSEGAMRASETVSEASPSSTASQTGVPTQVVQQVQGTQQRLLVQASVQAKPGHVSPLQLTNIQVPQQAIPTQHLVVQSPAPGTKSGQVSLTVHSAQQVHSAPERSPVQANNSTSKTAGTPAATVQQLQVHSVQQSVPVTQERSVVQATPQTKAGPVQQLTVQGLQPVHVAQEVQQLPQVPVPHVYSSQVQYVEGGDASYTASAIRSSTYQYPETPIYTQTAGTSYYEASGTAAQVSTPATSQTVASSGSVPMYVSGSPIVASSSSSEAGASNSSVGAGGNGGGGSSGGGSGGSSGSGAGTYVIQGGYMLGNASQSYSHTTRASPATVQWLLDNYETAEGVSLPRSTLYCHYLLHCQEQKLEPVNAASFGKLIRSVFMGLRTRRLGTRGNSKYHYYGLRIKASSPLLRLMEDQQHMAMRGQPFSQKQRLKPIQKMEGVANGVAVGQQSTGLSDISAQVQQYQQFLDASRSLPDFAELDLQGKVLPEGVGPGDIKAFQVLYREHCEAIVDVMVNLQFTLVETLWKTFWRYNLSQPSEAPPLAVHDEAEKRLPRASLVLLSKFQPVLQWTKHCDNVLYQGLVEILIPDVLRPIPSALTQAIRNFAKSLESWLTHAMVNIPEEMLRVKVAAAGAFAQTLRRYTSLNHLAQAARAVLQNTAQINQMLSDLNRVDFANVQEQASWVCRCEDRVVQRLEQDFKVTLQQQNSLEQWAAWLDGVVSQVLKPYQGSSGFPKAAKLFLLKWSFYSSMVIRDLTLRSAASFGSFHLIRLLYDEYMYYLIEHRVAQAKGETPIAVMGEFANLATSLNPLDPDKDEEEEEEEESEDELPQDISLAAGSESPALGPEALEPPAKLARTDTRGLFVQALPSS</sequence>
<reference key="1">
    <citation type="journal article" date="1994" name="Mol. Cell. Biol.">
        <title>RFX1, a transactivator of hepatitis B virus enhancer I, belongs to a novel family of homodimeric and heterodimeric DNA-binding proteins.</title>
        <authorList>
            <person name="Reith W."/>
            <person name="Ucla C."/>
            <person name="Barras E."/>
            <person name="Gaud A."/>
            <person name="Durand B."/>
            <person name="Herrero-Sanchez C."/>
            <person name="Kobr M."/>
            <person name="Mach B."/>
        </authorList>
    </citation>
    <scope>NUCLEOTIDE SEQUENCE [MRNA]</scope>
    <source>
        <strain>BALB/cJ</strain>
        <tissue>Spleen</tissue>
    </source>
</reference>
<reference key="2">
    <citation type="submission" date="2005-07" db="EMBL/GenBank/DDBJ databases">
        <authorList>
            <person name="Mural R.J."/>
            <person name="Adams M.D."/>
            <person name="Myers E.W."/>
            <person name="Smith H.O."/>
            <person name="Venter J.C."/>
        </authorList>
    </citation>
    <scope>NUCLEOTIDE SEQUENCE [LARGE SCALE GENOMIC DNA]</scope>
</reference>
<reference key="3">
    <citation type="journal article" date="2004" name="Genome Res.">
        <title>The status, quality, and expansion of the NIH full-length cDNA project: the Mammalian Gene Collection (MGC).</title>
        <authorList>
            <consortium name="The MGC Project Team"/>
        </authorList>
    </citation>
    <scope>NUCLEOTIDE SEQUENCE [LARGE SCALE MRNA]</scope>
    <source>
        <strain>C57BL/6J</strain>
        <tissue>Brain</tissue>
    </source>
</reference>
<reference key="4">
    <citation type="journal article" date="2004" name="Biol. Reprod.">
        <title>RFX2 is a potential transcriptional regulatory factor for histone H1t and other genes expressed during the meiotic phase of spermatogenesis.</title>
        <authorList>
            <person name="Horvath G.C."/>
            <person name="Kistler W.S."/>
            <person name="Kistler M.K."/>
        </authorList>
    </citation>
    <scope>SUBUNIT</scope>
</reference>
<reference key="5">
    <citation type="journal article" date="2010" name="Cell">
        <title>A tissue-specific atlas of mouse protein phosphorylation and expression.</title>
        <authorList>
            <person name="Huttlin E.L."/>
            <person name="Jedrychowski M.P."/>
            <person name="Elias J.E."/>
            <person name="Goswami T."/>
            <person name="Rad R."/>
            <person name="Beausoleil S.A."/>
            <person name="Villen J."/>
            <person name="Haas W."/>
            <person name="Sowa M.E."/>
            <person name="Gygi S.P."/>
        </authorList>
    </citation>
    <scope>IDENTIFICATION BY MASS SPECTROMETRY [LARGE SCALE ANALYSIS]</scope>
    <source>
        <tissue>Lung</tissue>
    </source>
</reference>
<name>RFX1_MOUSE</name>
<gene>
    <name type="primary">Rfx1</name>
</gene>
<organism>
    <name type="scientific">Mus musculus</name>
    <name type="common">Mouse</name>
    <dbReference type="NCBI Taxonomy" id="10090"/>
    <lineage>
        <taxon>Eukaryota</taxon>
        <taxon>Metazoa</taxon>
        <taxon>Chordata</taxon>
        <taxon>Craniata</taxon>
        <taxon>Vertebrata</taxon>
        <taxon>Euteleostomi</taxon>
        <taxon>Mammalia</taxon>
        <taxon>Eutheria</taxon>
        <taxon>Euarchontoglires</taxon>
        <taxon>Glires</taxon>
        <taxon>Rodentia</taxon>
        <taxon>Myomorpha</taxon>
        <taxon>Muroidea</taxon>
        <taxon>Muridae</taxon>
        <taxon>Murinae</taxon>
        <taxon>Mus</taxon>
        <taxon>Mus</taxon>
    </lineage>
</organism>
<dbReference type="EMBL" id="X76088">
    <property type="protein sequence ID" value="CAA53702.1"/>
    <property type="molecule type" value="mRNA"/>
</dbReference>
<dbReference type="EMBL" id="CH466525">
    <property type="protein sequence ID" value="EDL10930.1"/>
    <property type="molecule type" value="Genomic_DNA"/>
</dbReference>
<dbReference type="EMBL" id="BC057018">
    <property type="protein sequence ID" value="AAH57018.1"/>
    <property type="molecule type" value="mRNA"/>
</dbReference>
<dbReference type="CCDS" id="CCDS22468.1"/>
<dbReference type="PIR" id="A55926">
    <property type="entry name" value="A55926"/>
</dbReference>
<dbReference type="RefSeq" id="NP_033081.3">
    <property type="nucleotide sequence ID" value="NM_009055.4"/>
</dbReference>
<dbReference type="RefSeq" id="XP_030099221.1">
    <property type="nucleotide sequence ID" value="XM_030243361.2"/>
</dbReference>
<dbReference type="SMR" id="P48377"/>
<dbReference type="BioGRID" id="202872">
    <property type="interactions" value="4"/>
</dbReference>
<dbReference type="FunCoup" id="P48377">
    <property type="interactions" value="4061"/>
</dbReference>
<dbReference type="STRING" id="10090.ENSMUSP00000005600"/>
<dbReference type="GlyGen" id="P48377">
    <property type="glycosylation" value="9 sites, 1 O-linked glycan (8 sites)"/>
</dbReference>
<dbReference type="iPTMnet" id="P48377"/>
<dbReference type="PhosphoSitePlus" id="P48377"/>
<dbReference type="SwissPalm" id="P48377"/>
<dbReference type="jPOST" id="P48377"/>
<dbReference type="PaxDb" id="10090-ENSMUSP00000005600"/>
<dbReference type="PeptideAtlas" id="P48377"/>
<dbReference type="ProteomicsDB" id="255188"/>
<dbReference type="Pumba" id="P48377"/>
<dbReference type="Antibodypedia" id="26599">
    <property type="antibodies" value="177 antibodies from 27 providers"/>
</dbReference>
<dbReference type="DNASU" id="19724"/>
<dbReference type="Ensembl" id="ENSMUST00000005600.6">
    <property type="protein sequence ID" value="ENSMUSP00000005600.6"/>
    <property type="gene ID" value="ENSMUSG00000031706.8"/>
</dbReference>
<dbReference type="GeneID" id="19724"/>
<dbReference type="KEGG" id="mmu:19724"/>
<dbReference type="UCSC" id="uc009mlv.2">
    <property type="organism name" value="mouse"/>
</dbReference>
<dbReference type="AGR" id="MGI:105982"/>
<dbReference type="CTD" id="5989"/>
<dbReference type="MGI" id="MGI:105982">
    <property type="gene designation" value="Rfx1"/>
</dbReference>
<dbReference type="VEuPathDB" id="HostDB:ENSMUSG00000031706"/>
<dbReference type="eggNOG" id="KOG3712">
    <property type="taxonomic scope" value="Eukaryota"/>
</dbReference>
<dbReference type="GeneTree" id="ENSGT01050000244879"/>
<dbReference type="HOGENOM" id="CLU_010393_1_0_1"/>
<dbReference type="InParanoid" id="P48377"/>
<dbReference type="OMA" id="CCLEDER"/>
<dbReference type="OrthoDB" id="10056949at2759"/>
<dbReference type="PhylomeDB" id="P48377"/>
<dbReference type="TreeFam" id="TF321340"/>
<dbReference type="BioGRID-ORCS" id="19724">
    <property type="hits" value="3 hits in 77 CRISPR screens"/>
</dbReference>
<dbReference type="ChiTaRS" id="Rfx1">
    <property type="organism name" value="mouse"/>
</dbReference>
<dbReference type="PRO" id="PR:P48377"/>
<dbReference type="Proteomes" id="UP000000589">
    <property type="component" value="Chromosome 8"/>
</dbReference>
<dbReference type="RNAct" id="P48377">
    <property type="molecule type" value="protein"/>
</dbReference>
<dbReference type="Bgee" id="ENSMUSG00000031706">
    <property type="expression patterns" value="Expressed in ascending aorta and 219 other cell types or tissues"/>
</dbReference>
<dbReference type="ExpressionAtlas" id="P48377">
    <property type="expression patterns" value="baseline and differential"/>
</dbReference>
<dbReference type="GO" id="GO:0005654">
    <property type="term" value="C:nucleoplasm"/>
    <property type="evidence" value="ECO:0007669"/>
    <property type="project" value="Ensembl"/>
</dbReference>
<dbReference type="GO" id="GO:0005634">
    <property type="term" value="C:nucleus"/>
    <property type="evidence" value="ECO:0000314"/>
    <property type="project" value="MGI"/>
</dbReference>
<dbReference type="GO" id="GO:0003677">
    <property type="term" value="F:DNA binding"/>
    <property type="evidence" value="ECO:0000314"/>
    <property type="project" value="MGI"/>
</dbReference>
<dbReference type="GO" id="GO:0003700">
    <property type="term" value="F:DNA-binding transcription factor activity"/>
    <property type="evidence" value="ECO:0007669"/>
    <property type="project" value="InterPro"/>
</dbReference>
<dbReference type="GO" id="GO:1990837">
    <property type="term" value="F:sequence-specific double-stranded DNA binding"/>
    <property type="evidence" value="ECO:0007669"/>
    <property type="project" value="Ensembl"/>
</dbReference>
<dbReference type="FunFam" id="1.10.10.10:FF:000017">
    <property type="entry name" value="transcription factor RFX3 isoform X1"/>
    <property type="match status" value="1"/>
</dbReference>
<dbReference type="Gene3D" id="1.10.10.10">
    <property type="entry name" value="Winged helix-like DNA-binding domain superfamily/Winged helix DNA-binding domain"/>
    <property type="match status" value="1"/>
</dbReference>
<dbReference type="InterPro" id="IPR003150">
    <property type="entry name" value="DNA-bd_RFX"/>
</dbReference>
<dbReference type="InterPro" id="IPR039779">
    <property type="entry name" value="RFX-like"/>
</dbReference>
<dbReference type="InterPro" id="IPR007668">
    <property type="entry name" value="RFX1_trans_act"/>
</dbReference>
<dbReference type="InterPro" id="IPR036388">
    <property type="entry name" value="WH-like_DNA-bd_sf"/>
</dbReference>
<dbReference type="InterPro" id="IPR036390">
    <property type="entry name" value="WH_DNA-bd_sf"/>
</dbReference>
<dbReference type="PANTHER" id="PTHR12619:SF23">
    <property type="entry name" value="MHC CLASS II REGULATORY FACTOR RFX1"/>
    <property type="match status" value="1"/>
</dbReference>
<dbReference type="PANTHER" id="PTHR12619">
    <property type="entry name" value="RFX TRANSCRIPTION FACTOR FAMILY"/>
    <property type="match status" value="1"/>
</dbReference>
<dbReference type="Pfam" id="PF25340">
    <property type="entry name" value="BCD_RFX"/>
    <property type="match status" value="1"/>
</dbReference>
<dbReference type="Pfam" id="PF04589">
    <property type="entry name" value="RFX1_trans_act"/>
    <property type="match status" value="1"/>
</dbReference>
<dbReference type="Pfam" id="PF02257">
    <property type="entry name" value="RFX_DNA_binding"/>
    <property type="match status" value="1"/>
</dbReference>
<dbReference type="SUPFAM" id="SSF46785">
    <property type="entry name" value="Winged helix' DNA-binding domain"/>
    <property type="match status" value="1"/>
</dbReference>
<dbReference type="PROSITE" id="PS51526">
    <property type="entry name" value="RFX_DBD"/>
    <property type="match status" value="1"/>
</dbReference>
<evidence type="ECO:0000250" key="1"/>
<evidence type="ECO:0000250" key="2">
    <source>
        <dbReference type="UniProtKB" id="P22670"/>
    </source>
</evidence>
<evidence type="ECO:0000255" key="3">
    <source>
        <dbReference type="PROSITE-ProRule" id="PRU00858"/>
    </source>
</evidence>
<evidence type="ECO:0000256" key="4">
    <source>
        <dbReference type="SAM" id="MobiDB-lite"/>
    </source>
</evidence>
<evidence type="ECO:0000269" key="5">
    <source>
    </source>
</evidence>
<evidence type="ECO:0000305" key="6"/>
<keyword id="KW-0010">Activator</keyword>
<keyword id="KW-0238">DNA-binding</keyword>
<keyword id="KW-0539">Nucleus</keyword>
<keyword id="KW-0597">Phosphoprotein</keyword>
<keyword id="KW-1185">Reference proteome</keyword>
<keyword id="KW-0804">Transcription</keyword>
<keyword id="KW-0805">Transcription regulation</keyword>
<comment type="function">
    <text evidence="1">Regulatory factor essential for MHC class II genes expression. Binds to the X boxes of MHC class II genes (By similarity).</text>
</comment>
<comment type="subunit">
    <text evidence="2 5">Homodimer; binds DNA as a homodimer (By similarity). Heterodimer; heterodimerizes with RFX2 and RFX3 (PubMed:15229132).</text>
</comment>
<comment type="subcellular location">
    <subcellularLocation>
        <location evidence="3">Nucleus</location>
    </subcellularLocation>
</comment>
<comment type="similarity">
    <text evidence="3">Belongs to the RFX family.</text>
</comment>
<proteinExistence type="evidence at protein level"/>
<feature type="chain" id="PRO_0000215287" description="MHC class II regulatory factor RFX1">
    <location>
        <begin position="1"/>
        <end position="963"/>
    </location>
</feature>
<feature type="DNA-binding region" description="RFX-type winged-helix" evidence="3">
    <location>
        <begin position="423"/>
        <end position="498"/>
    </location>
</feature>
<feature type="region of interest" description="Disordered" evidence="4">
    <location>
        <begin position="1"/>
        <end position="88"/>
    </location>
</feature>
<feature type="region of interest" description="Disordered" evidence="4">
    <location>
        <begin position="105"/>
        <end position="126"/>
    </location>
</feature>
<feature type="region of interest" description="Disordered" evidence="4">
    <location>
        <begin position="174"/>
        <end position="218"/>
    </location>
</feature>
<feature type="region of interest" description="Disordered" evidence="4">
    <location>
        <begin position="361"/>
        <end position="392"/>
    </location>
</feature>
<feature type="region of interest" description="Disordered" evidence="4">
    <location>
        <begin position="899"/>
        <end position="948"/>
    </location>
</feature>
<feature type="compositionally biased region" description="Pro residues" evidence="4">
    <location>
        <begin position="20"/>
        <end position="41"/>
    </location>
</feature>
<feature type="compositionally biased region" description="Low complexity" evidence="4">
    <location>
        <begin position="42"/>
        <end position="67"/>
    </location>
</feature>
<feature type="compositionally biased region" description="Pro residues" evidence="4">
    <location>
        <begin position="75"/>
        <end position="87"/>
    </location>
</feature>
<feature type="compositionally biased region" description="Polar residues" evidence="4">
    <location>
        <begin position="107"/>
        <end position="119"/>
    </location>
</feature>
<feature type="compositionally biased region" description="Polar residues" evidence="4">
    <location>
        <begin position="181"/>
        <end position="196"/>
    </location>
</feature>
<feature type="compositionally biased region" description="Polar residues" evidence="4">
    <location>
        <begin position="204"/>
        <end position="214"/>
    </location>
</feature>
<feature type="compositionally biased region" description="Low complexity" evidence="4">
    <location>
        <begin position="361"/>
        <end position="372"/>
    </location>
</feature>
<feature type="compositionally biased region" description="Gly residues" evidence="4">
    <location>
        <begin position="373"/>
        <end position="392"/>
    </location>
</feature>
<feature type="compositionally biased region" description="Acidic residues" evidence="4">
    <location>
        <begin position="906"/>
        <end position="922"/>
    </location>
</feature>
<feature type="compositionally biased region" description="Low complexity" evidence="4">
    <location>
        <begin position="932"/>
        <end position="947"/>
    </location>
</feature>
<feature type="modified residue" description="Phosphoserine" evidence="2">
    <location>
        <position position="54"/>
    </location>
</feature>
<feature type="modified residue" description="Phosphoserine" evidence="2">
    <location>
        <position position="962"/>
    </location>
</feature>
<feature type="modified residue" description="Phosphoserine" evidence="2">
    <location>
        <position position="963"/>
    </location>
</feature>
<feature type="sequence conflict" description="In Ref. 1; CAA53702." evidence="6" ref="1">
    <original>QH</original>
    <variation>HD</variation>
    <location>
        <begin position="169"/>
        <end position="170"/>
    </location>
</feature>